<gene>
    <name evidence="1" type="primary">rnfA</name>
    <name type="ordered locus">HS_1059</name>
</gene>
<protein>
    <recommendedName>
        <fullName evidence="1">Ion-translocating oxidoreductase complex subunit A</fullName>
        <ecNumber evidence="1">7.-.-.-</ecNumber>
    </recommendedName>
    <alternativeName>
        <fullName evidence="1">Rnf electron transport complex subunit A</fullName>
    </alternativeName>
</protein>
<accession>Q0I487</accession>
<dbReference type="EC" id="7.-.-.-" evidence="1"/>
<dbReference type="EMBL" id="CP000436">
    <property type="protein sequence ID" value="ABI25334.1"/>
    <property type="molecule type" value="Genomic_DNA"/>
</dbReference>
<dbReference type="SMR" id="Q0I487"/>
<dbReference type="KEGG" id="hso:HS_1059"/>
<dbReference type="eggNOG" id="COG4657">
    <property type="taxonomic scope" value="Bacteria"/>
</dbReference>
<dbReference type="HOGENOM" id="CLU_095255_1_0_6"/>
<dbReference type="GO" id="GO:0005886">
    <property type="term" value="C:plasma membrane"/>
    <property type="evidence" value="ECO:0007669"/>
    <property type="project" value="UniProtKB-SubCell"/>
</dbReference>
<dbReference type="GO" id="GO:0022900">
    <property type="term" value="P:electron transport chain"/>
    <property type="evidence" value="ECO:0007669"/>
    <property type="project" value="UniProtKB-UniRule"/>
</dbReference>
<dbReference type="HAMAP" id="MF_00459">
    <property type="entry name" value="RsxA_RnfA"/>
    <property type="match status" value="1"/>
</dbReference>
<dbReference type="InterPro" id="IPR011293">
    <property type="entry name" value="Ion_transpt_RnfA/RsxA"/>
</dbReference>
<dbReference type="InterPro" id="IPR003667">
    <property type="entry name" value="NqrDE/RnfAE"/>
</dbReference>
<dbReference type="InterPro" id="IPR050133">
    <property type="entry name" value="NqrDE/RnfAE_oxidrdctase"/>
</dbReference>
<dbReference type="NCBIfam" id="NF003481">
    <property type="entry name" value="PRK05151.1"/>
    <property type="match status" value="1"/>
</dbReference>
<dbReference type="NCBIfam" id="TIGR01943">
    <property type="entry name" value="rnfA"/>
    <property type="match status" value="1"/>
</dbReference>
<dbReference type="PANTHER" id="PTHR30335">
    <property type="entry name" value="INTEGRAL MEMBRANE PROTEIN OF SOXR-REDUCING COMPLEX"/>
    <property type="match status" value="1"/>
</dbReference>
<dbReference type="PANTHER" id="PTHR30335:SF0">
    <property type="entry name" value="ION-TRANSLOCATING OXIDOREDUCTASE COMPLEX SUBUNIT A"/>
    <property type="match status" value="1"/>
</dbReference>
<dbReference type="Pfam" id="PF02508">
    <property type="entry name" value="Rnf-Nqr"/>
    <property type="match status" value="1"/>
</dbReference>
<dbReference type="PIRSF" id="PIRSF006102">
    <property type="entry name" value="NQR_DE"/>
    <property type="match status" value="1"/>
</dbReference>
<keyword id="KW-0997">Cell inner membrane</keyword>
<keyword id="KW-1003">Cell membrane</keyword>
<keyword id="KW-0249">Electron transport</keyword>
<keyword id="KW-0472">Membrane</keyword>
<keyword id="KW-1278">Translocase</keyword>
<keyword id="KW-0812">Transmembrane</keyword>
<keyword id="KW-1133">Transmembrane helix</keyword>
<keyword id="KW-0813">Transport</keyword>
<evidence type="ECO:0000255" key="1">
    <source>
        <dbReference type="HAMAP-Rule" id="MF_00459"/>
    </source>
</evidence>
<feature type="chain" id="PRO_1000013533" description="Ion-translocating oxidoreductase complex subunit A">
    <location>
        <begin position="1"/>
        <end position="193"/>
    </location>
</feature>
<feature type="transmembrane region" description="Helical" evidence="1">
    <location>
        <begin position="5"/>
        <end position="25"/>
    </location>
</feature>
<feature type="transmembrane region" description="Helical" evidence="1">
    <location>
        <begin position="39"/>
        <end position="59"/>
    </location>
</feature>
<feature type="transmembrane region" description="Helical" evidence="1">
    <location>
        <begin position="72"/>
        <end position="92"/>
    </location>
</feature>
<feature type="transmembrane region" description="Helical" evidence="1">
    <location>
        <begin position="102"/>
        <end position="122"/>
    </location>
</feature>
<feature type="transmembrane region" description="Helical" evidence="1">
    <location>
        <begin position="134"/>
        <end position="154"/>
    </location>
</feature>
<feature type="transmembrane region" description="Helical" evidence="1">
    <location>
        <begin position="171"/>
        <end position="191"/>
    </location>
</feature>
<reference key="1">
    <citation type="journal article" date="2007" name="J. Bacteriol.">
        <title>Complete genome sequence of Haemophilus somnus (Histophilus somni) strain 129Pt and comparison to Haemophilus ducreyi 35000HP and Haemophilus influenzae Rd.</title>
        <authorList>
            <person name="Challacombe J.F."/>
            <person name="Duncan A.J."/>
            <person name="Brettin T.S."/>
            <person name="Bruce D."/>
            <person name="Chertkov O."/>
            <person name="Detter J.C."/>
            <person name="Han C.S."/>
            <person name="Misra M."/>
            <person name="Richardson P."/>
            <person name="Tapia R."/>
            <person name="Thayer N."/>
            <person name="Xie G."/>
            <person name="Inzana T.J."/>
        </authorList>
    </citation>
    <scope>NUCLEOTIDE SEQUENCE [LARGE SCALE GENOMIC DNA]</scope>
    <source>
        <strain>129Pt</strain>
    </source>
</reference>
<comment type="function">
    <text evidence="1">Part of a membrane-bound complex that couples electron transfer with translocation of ions across the membrane.</text>
</comment>
<comment type="subunit">
    <text evidence="1">The complex is composed of six subunits: RnfA, RnfB, RnfC, RnfD, RnfE and RnfG.</text>
</comment>
<comment type="subcellular location">
    <subcellularLocation>
        <location evidence="1">Cell inner membrane</location>
        <topology evidence="1">Multi-pass membrane protein</topology>
    </subcellularLocation>
</comment>
<comment type="similarity">
    <text evidence="1">Belongs to the NqrDE/RnfAE family.</text>
</comment>
<name>RNFA_HISS1</name>
<proteinExistence type="inferred from homology"/>
<organism>
    <name type="scientific">Histophilus somni (strain 129Pt)</name>
    <name type="common">Haemophilus somnus</name>
    <dbReference type="NCBI Taxonomy" id="205914"/>
    <lineage>
        <taxon>Bacteria</taxon>
        <taxon>Pseudomonadati</taxon>
        <taxon>Pseudomonadota</taxon>
        <taxon>Gammaproteobacteria</taxon>
        <taxon>Pasteurellales</taxon>
        <taxon>Pasteurellaceae</taxon>
        <taxon>Histophilus</taxon>
    </lineage>
</organism>
<sequence length="193" mass="20921">MIDYILLIISTALINNFVLVKFLGLCPFMGVSKKIETAIGMGLATMFVLTVASLCAYLVEHYLLTPLHANFLRTLIFILVIAVVVQFTEMVIHKTSPTLYRLLGIFLPLITTNCAVLGVALLNINLAHNLTQSVIYGFSASLGFSLVLVLFAALRERLTAADIPLPFRGASIALITAGLMSLAFMGFSGLVRV</sequence>